<comment type="function">
    <text evidence="5">RING-type ubiquitin E3 ligase that binds ubiquitin and is required for seed germination and post-germination growth.</text>
</comment>
<comment type="catalytic activity">
    <reaction evidence="5">
        <text>S-ubiquitinyl-[E2 ubiquitin-conjugating enzyme]-L-cysteine + [acceptor protein]-L-lysine = [E2 ubiquitin-conjugating enzyme]-L-cysteine + N(6)-ubiquitinyl-[acceptor protein]-L-lysine.</text>
        <dbReference type="EC" id="2.3.2.27"/>
    </reaction>
</comment>
<comment type="pathway">
    <text evidence="5">Protein modification; protein ubiquitination.</text>
</comment>
<comment type="subunit">
    <text evidence="5">Component of the heteromeric E3 ligase complex made of BRIZ1 and BRIZ2 (PubMed:20810661). Forms heterooligomers with BRIZ1 via coiled-coil domains (PubMed:20810661).</text>
</comment>
<comment type="disruption phenotype">
    <text evidence="5">Viable heterozygous plants seeds are slow to emerge from the seed coat; emerged embryos remains white with unexpanded cotyledons thus leading to growth-arrested seedlings.</text>
</comment>
<accession>O80996</accession>
<accession>A0A178W1J8</accession>
<organism>
    <name type="scientific">Arabidopsis thaliana</name>
    <name type="common">Mouse-ear cress</name>
    <dbReference type="NCBI Taxonomy" id="3702"/>
    <lineage>
        <taxon>Eukaryota</taxon>
        <taxon>Viridiplantae</taxon>
        <taxon>Streptophyta</taxon>
        <taxon>Embryophyta</taxon>
        <taxon>Tracheophyta</taxon>
        <taxon>Spermatophyta</taxon>
        <taxon>Magnoliopsida</taxon>
        <taxon>eudicotyledons</taxon>
        <taxon>Gunneridae</taxon>
        <taxon>Pentapetalae</taxon>
        <taxon>rosids</taxon>
        <taxon>malvids</taxon>
        <taxon>Brassicales</taxon>
        <taxon>Brassicaceae</taxon>
        <taxon>Camelineae</taxon>
        <taxon>Arabidopsis</taxon>
    </lineage>
</organism>
<protein>
    <recommendedName>
        <fullName evidence="6">BRAP2 RING ZnF UBP domain-containing protein 2</fullName>
        <ecNumber evidence="5">2.3.2.27</ecNumber>
    </recommendedName>
</protein>
<proteinExistence type="evidence at protein level"/>
<reference key="1">
    <citation type="journal article" date="2010" name="J. Biol. Chem.">
        <title>BRIZ1 and BRIZ2 proteins form a heteromeric E3 ligase complex required for seed germination and post-germination growth in Arabidopsis thaliana.</title>
        <authorList>
            <person name="Hsia M.M."/>
            <person name="Callis J."/>
        </authorList>
    </citation>
    <scope>NUCLEOTIDE SEQUENCE [MRNA]</scope>
    <scope>FUNCTION</scope>
    <scope>DISRUPTION PHENOTYPE</scope>
    <scope>CATALYTIC ACTIVITY</scope>
    <scope>SUBUNIT</scope>
    <scope>PATHWAY</scope>
    <source>
        <strain>cv. Columbia</strain>
        <tissue>Seedling</tissue>
    </source>
</reference>
<reference key="2">
    <citation type="journal article" date="1999" name="Nature">
        <title>Sequence and analysis of chromosome 2 of the plant Arabidopsis thaliana.</title>
        <authorList>
            <person name="Lin X."/>
            <person name="Kaul S."/>
            <person name="Rounsley S.D."/>
            <person name="Shea T.P."/>
            <person name="Benito M.-I."/>
            <person name="Town C.D."/>
            <person name="Fujii C.Y."/>
            <person name="Mason T.M."/>
            <person name="Bowman C.L."/>
            <person name="Barnstead M.E."/>
            <person name="Feldblyum T.V."/>
            <person name="Buell C.R."/>
            <person name="Ketchum K.A."/>
            <person name="Lee J.J."/>
            <person name="Ronning C.M."/>
            <person name="Koo H.L."/>
            <person name="Moffat K.S."/>
            <person name="Cronin L.A."/>
            <person name="Shen M."/>
            <person name="Pai G."/>
            <person name="Van Aken S."/>
            <person name="Umayam L."/>
            <person name="Tallon L.J."/>
            <person name="Gill J.E."/>
            <person name="Adams M.D."/>
            <person name="Carrera A.J."/>
            <person name="Creasy T.H."/>
            <person name="Goodman H.M."/>
            <person name="Somerville C.R."/>
            <person name="Copenhaver G.P."/>
            <person name="Preuss D."/>
            <person name="Nierman W.C."/>
            <person name="White O."/>
            <person name="Eisen J.A."/>
            <person name="Salzberg S.L."/>
            <person name="Fraser C.M."/>
            <person name="Venter J.C."/>
        </authorList>
    </citation>
    <scope>NUCLEOTIDE SEQUENCE [LARGE SCALE GENOMIC DNA]</scope>
    <source>
        <strain>cv. Columbia</strain>
    </source>
</reference>
<reference key="3">
    <citation type="journal article" date="2017" name="Plant J.">
        <title>Araport11: a complete reannotation of the Arabidopsis thaliana reference genome.</title>
        <authorList>
            <person name="Cheng C.Y."/>
            <person name="Krishnakumar V."/>
            <person name="Chan A.P."/>
            <person name="Thibaud-Nissen F."/>
            <person name="Schobel S."/>
            <person name="Town C.D."/>
        </authorList>
    </citation>
    <scope>GENOME REANNOTATION</scope>
    <source>
        <strain>cv. Columbia</strain>
    </source>
</reference>
<reference key="4">
    <citation type="submission" date="2004-07" db="EMBL/GenBank/DDBJ databases">
        <title>Arabidopsis ORF clones.</title>
        <authorList>
            <person name="Cheuk R.F."/>
            <person name="Chen H."/>
            <person name="Kim C.J."/>
            <person name="Shinn P."/>
            <person name="Ecker J.R."/>
        </authorList>
    </citation>
    <scope>NUCLEOTIDE SEQUENCE [LARGE SCALE MRNA]</scope>
    <source>
        <strain>cv. Columbia</strain>
    </source>
</reference>
<reference key="5">
    <citation type="journal article" date="2002" name="Genome Biol.">
        <title>Evaluation and classification of RING-finger domains encoded by the Arabidopsis genome.</title>
        <authorList>
            <person name="Kosarev P."/>
            <person name="Mayer K.F.X."/>
            <person name="Hardtke C.S."/>
        </authorList>
    </citation>
    <scope>GENE FAMILY</scope>
</reference>
<feature type="chain" id="PRO_0000447001" description="BRAP2 RING ZnF UBP domain-containing protein 2">
    <location>
        <begin position="1"/>
        <end position="479"/>
    </location>
</feature>
<feature type="zinc finger region" description="RING-type; atypical" evidence="2">
    <location>
        <begin position="167"/>
        <end position="207"/>
    </location>
</feature>
<feature type="zinc finger region" description="UBP-type; degenerate" evidence="3">
    <location>
        <begin position="201"/>
        <end position="294"/>
    </location>
</feature>
<feature type="region of interest" description="Disordered" evidence="4">
    <location>
        <begin position="434"/>
        <end position="479"/>
    </location>
</feature>
<feature type="coiled-coil region" evidence="1">
    <location>
        <begin position="328"/>
        <end position="442"/>
    </location>
</feature>
<feature type="compositionally biased region" description="Low complexity" evidence="4">
    <location>
        <begin position="451"/>
        <end position="466"/>
    </location>
</feature>
<feature type="compositionally biased region" description="Basic residues" evidence="4">
    <location>
        <begin position="469"/>
        <end position="479"/>
    </location>
</feature>
<feature type="binding site" evidence="3">
    <location>
        <position position="218"/>
    </location>
    <ligand>
        <name>Zn(2+)</name>
        <dbReference type="ChEBI" id="CHEBI:29105"/>
        <label>1</label>
    </ligand>
</feature>
<feature type="binding site" evidence="3">
    <location>
        <position position="221"/>
    </location>
    <ligand>
        <name>Zn(2+)</name>
        <dbReference type="ChEBI" id="CHEBI:29105"/>
        <label>1</label>
    </ligand>
</feature>
<feature type="binding site" evidence="3">
    <location>
        <position position="230"/>
    </location>
    <ligand>
        <name>Zn(2+)</name>
        <dbReference type="ChEBI" id="CHEBI:29105"/>
        <label>2</label>
    </ligand>
</feature>
<feature type="binding site" evidence="3">
    <location>
        <position position="233"/>
    </location>
    <ligand>
        <name>Zn(2+)</name>
        <dbReference type="ChEBI" id="CHEBI:29105"/>
        <label>2</label>
    </ligand>
</feature>
<feature type="binding site" evidence="3">
    <location>
        <position position="238"/>
    </location>
    <ligand>
        <name>Zn(2+)</name>
        <dbReference type="ChEBI" id="CHEBI:29105"/>
        <label>1</label>
    </ligand>
</feature>
<feature type="binding site" evidence="3">
    <location>
        <position position="245"/>
    </location>
    <ligand>
        <name>Zn(2+)</name>
        <dbReference type="ChEBI" id="CHEBI:29105"/>
        <label>1</label>
    </ligand>
</feature>
<feature type="binding site" evidence="3">
    <location>
        <position position="249"/>
    </location>
    <ligand>
        <name>Zn(2+)</name>
        <dbReference type="ChEBI" id="CHEBI:29105"/>
        <label>2</label>
    </ligand>
</feature>
<feature type="binding site" evidence="3">
    <location>
        <position position="255"/>
    </location>
    <ligand>
        <name>Zn(2+)</name>
        <dbReference type="ChEBI" id="CHEBI:29105"/>
        <label>2</label>
    </ligand>
</feature>
<keyword id="KW-0175">Coiled coil</keyword>
<keyword id="KW-0479">Metal-binding</keyword>
<keyword id="KW-1185">Reference proteome</keyword>
<keyword id="KW-0808">Transferase</keyword>
<keyword id="KW-0833">Ubl conjugation pathway</keyword>
<keyword id="KW-0862">Zinc</keyword>
<keyword id="KW-0863">Zinc-finger</keyword>
<dbReference type="EC" id="2.3.2.27" evidence="5"/>
<dbReference type="EMBL" id="HQ127734">
    <property type="protein sequence ID" value="ADQ57815.1"/>
    <property type="molecule type" value="mRNA"/>
</dbReference>
<dbReference type="EMBL" id="AC004747">
    <property type="protein sequence ID" value="AAC31235.1"/>
    <property type="molecule type" value="Genomic_DNA"/>
</dbReference>
<dbReference type="EMBL" id="CP002685">
    <property type="protein sequence ID" value="AEC07782.1"/>
    <property type="molecule type" value="Genomic_DNA"/>
</dbReference>
<dbReference type="EMBL" id="CP002685">
    <property type="protein sequence ID" value="ANM61430.1"/>
    <property type="molecule type" value="Genomic_DNA"/>
</dbReference>
<dbReference type="EMBL" id="BT015082">
    <property type="protein sequence ID" value="AAT71954.1"/>
    <property type="molecule type" value="mRNA"/>
</dbReference>
<dbReference type="EMBL" id="BT015905">
    <property type="protein sequence ID" value="AAU95441.1"/>
    <property type="molecule type" value="mRNA"/>
</dbReference>
<dbReference type="PIR" id="T02623">
    <property type="entry name" value="T02623"/>
</dbReference>
<dbReference type="RefSeq" id="NP_001031419.1">
    <property type="nucleotide sequence ID" value="NM_001036342.3"/>
</dbReference>
<dbReference type="RefSeq" id="NP_001323647.1">
    <property type="nucleotide sequence ID" value="NM_001336033.1"/>
</dbReference>
<dbReference type="SMR" id="O80996"/>
<dbReference type="FunCoup" id="O80996">
    <property type="interactions" value="3993"/>
</dbReference>
<dbReference type="STRING" id="3702.O80996"/>
<dbReference type="PaxDb" id="3702-AT2G26000.2"/>
<dbReference type="ProteomicsDB" id="181691"/>
<dbReference type="EnsemblPlants" id="AT2G26000.2">
    <property type="protein sequence ID" value="AT2G26000.2"/>
    <property type="gene ID" value="AT2G26000"/>
</dbReference>
<dbReference type="EnsemblPlants" id="AT2G26000.3">
    <property type="protein sequence ID" value="AT2G26000.3"/>
    <property type="gene ID" value="AT2G26000"/>
</dbReference>
<dbReference type="GeneID" id="817141"/>
<dbReference type="Gramene" id="AT2G26000.2">
    <property type="protein sequence ID" value="AT2G26000.2"/>
    <property type="gene ID" value="AT2G26000"/>
</dbReference>
<dbReference type="Gramene" id="AT2G26000.3">
    <property type="protein sequence ID" value="AT2G26000.3"/>
    <property type="gene ID" value="AT2G26000"/>
</dbReference>
<dbReference type="KEGG" id="ath:AT2G26000"/>
<dbReference type="Araport" id="AT2G26000"/>
<dbReference type="TAIR" id="AT2G26000">
    <property type="gene designation" value="BRIZ2"/>
</dbReference>
<dbReference type="eggNOG" id="KOG0804">
    <property type="taxonomic scope" value="Eukaryota"/>
</dbReference>
<dbReference type="HOGENOM" id="CLU_009969_1_0_1"/>
<dbReference type="InParanoid" id="O80996"/>
<dbReference type="OMA" id="RFNSIEP"/>
<dbReference type="OrthoDB" id="273556at2759"/>
<dbReference type="PhylomeDB" id="O80996"/>
<dbReference type="UniPathway" id="UPA00143"/>
<dbReference type="PRO" id="PR:O80996"/>
<dbReference type="Proteomes" id="UP000006548">
    <property type="component" value="Chromosome 2"/>
</dbReference>
<dbReference type="ExpressionAtlas" id="O80996">
    <property type="expression patterns" value="baseline and differential"/>
</dbReference>
<dbReference type="GO" id="GO:0000151">
    <property type="term" value="C:ubiquitin ligase complex"/>
    <property type="evidence" value="ECO:0000305"/>
    <property type="project" value="TAIR"/>
</dbReference>
<dbReference type="GO" id="GO:0046982">
    <property type="term" value="F:protein heterodimerization activity"/>
    <property type="evidence" value="ECO:0000314"/>
    <property type="project" value="TAIR"/>
</dbReference>
<dbReference type="GO" id="GO:0043130">
    <property type="term" value="F:ubiquitin binding"/>
    <property type="evidence" value="ECO:0000314"/>
    <property type="project" value="TAIR"/>
</dbReference>
<dbReference type="GO" id="GO:0004842">
    <property type="term" value="F:ubiquitin-protein transferase activity"/>
    <property type="evidence" value="ECO:0000314"/>
    <property type="project" value="TAIR"/>
</dbReference>
<dbReference type="GO" id="GO:0008270">
    <property type="term" value="F:zinc ion binding"/>
    <property type="evidence" value="ECO:0007669"/>
    <property type="project" value="UniProtKB-KW"/>
</dbReference>
<dbReference type="GO" id="GO:0016567">
    <property type="term" value="P:protein ubiquitination"/>
    <property type="evidence" value="ECO:0007669"/>
    <property type="project" value="UniProtKB-UniPathway"/>
</dbReference>
<dbReference type="GO" id="GO:0010029">
    <property type="term" value="P:regulation of seed germination"/>
    <property type="evidence" value="ECO:0000315"/>
    <property type="project" value="TAIR"/>
</dbReference>
<dbReference type="CDD" id="cd16457">
    <property type="entry name" value="RING-H2_BRAP2"/>
    <property type="match status" value="1"/>
</dbReference>
<dbReference type="CDD" id="cd12437">
    <property type="entry name" value="RRM_BRAP2_like"/>
    <property type="match status" value="1"/>
</dbReference>
<dbReference type="FunFam" id="3.30.40.10:FF:000576">
    <property type="entry name" value="RING finger protein ETP1"/>
    <property type="match status" value="1"/>
</dbReference>
<dbReference type="Gene3D" id="3.30.40.10">
    <property type="entry name" value="Zinc/RING finger domain, C3HC4 (zinc finger)"/>
    <property type="match status" value="2"/>
</dbReference>
<dbReference type="InterPro" id="IPR011422">
    <property type="entry name" value="BRAP2/ETP1_RRM"/>
</dbReference>
<dbReference type="InterPro" id="IPR047243">
    <property type="entry name" value="RING-H2_BRAP2"/>
</dbReference>
<dbReference type="InterPro" id="IPR001841">
    <property type="entry name" value="Znf_RING"/>
</dbReference>
<dbReference type="InterPro" id="IPR013083">
    <property type="entry name" value="Znf_RING/FYVE/PHD"/>
</dbReference>
<dbReference type="InterPro" id="IPR001607">
    <property type="entry name" value="Znf_UBP"/>
</dbReference>
<dbReference type="PANTHER" id="PTHR24007">
    <property type="entry name" value="BRCA1-ASSOCIATED PROTEIN"/>
    <property type="match status" value="1"/>
</dbReference>
<dbReference type="PANTHER" id="PTHR24007:SF7">
    <property type="entry name" value="BRCA1-ASSOCIATED PROTEIN"/>
    <property type="match status" value="1"/>
</dbReference>
<dbReference type="Pfam" id="PF07576">
    <property type="entry name" value="BRAP2"/>
    <property type="match status" value="1"/>
</dbReference>
<dbReference type="Pfam" id="PF13639">
    <property type="entry name" value="zf-RING_2"/>
    <property type="match status" value="1"/>
</dbReference>
<dbReference type="Pfam" id="PF02148">
    <property type="entry name" value="zf-UBP"/>
    <property type="match status" value="1"/>
</dbReference>
<dbReference type="SMART" id="SM00184">
    <property type="entry name" value="RING"/>
    <property type="match status" value="1"/>
</dbReference>
<dbReference type="SMART" id="SM00290">
    <property type="entry name" value="ZnF_UBP"/>
    <property type="match status" value="1"/>
</dbReference>
<dbReference type="SUPFAM" id="SSF57850">
    <property type="entry name" value="RING/U-box"/>
    <property type="match status" value="1"/>
</dbReference>
<dbReference type="PROSITE" id="PS50089">
    <property type="entry name" value="ZF_RING_2"/>
    <property type="match status" value="1"/>
</dbReference>
<dbReference type="PROSITE" id="PS50271">
    <property type="entry name" value="ZF_UBP"/>
    <property type="match status" value="1"/>
</dbReference>
<name>BRIZ2_ARATH</name>
<gene>
    <name evidence="6" type="primary">BRIZ2</name>
    <name evidence="7" type="ordered locus">At2g26000</name>
    <name evidence="8" type="ORF">T19L18.19</name>
</gene>
<evidence type="ECO:0000255" key="1"/>
<evidence type="ECO:0000255" key="2">
    <source>
        <dbReference type="PROSITE-ProRule" id="PRU00175"/>
    </source>
</evidence>
<evidence type="ECO:0000255" key="3">
    <source>
        <dbReference type="PROSITE-ProRule" id="PRU00502"/>
    </source>
</evidence>
<evidence type="ECO:0000256" key="4">
    <source>
        <dbReference type="SAM" id="MobiDB-lite"/>
    </source>
</evidence>
<evidence type="ECO:0000269" key="5">
    <source>
    </source>
</evidence>
<evidence type="ECO:0000303" key="6">
    <source>
    </source>
</evidence>
<evidence type="ECO:0000312" key="7">
    <source>
        <dbReference type="Araport" id="AT2G26000"/>
    </source>
</evidence>
<evidence type="ECO:0000312" key="8">
    <source>
        <dbReference type="EMBL" id="AAC31235.1"/>
    </source>
</evidence>
<sequence>MNSASVSGESSLSDMIQTVHFSSGNPRIGETRGVMHLISDNAVSSSSSSSSSNLPIGRNPLVCVLGVPNHMTYADFCQFCGSFIQHILDMRTVRNDDIENRYSILIRFDSQESTDTFFQHFRGKQFNSLDEDVCRLLFALDVQFTGYSGSIDHTQPSAAGPIEQPTCPVCLERLDQDTGGILTTMCNHSFHCSCISNWPDSSCPVCRYCQQQPENSVCCVCQTTENLWMCVICGVVGCGRYKEGHARRHWEETEHCYSLELETQRVWDYAGDNYVHRLIQSKTDGKLVELNSHGSLSKDGCGSCEYSDSGMTDALLNSKVDMIISEYNELLQAQLENQKQYFEKLLQNVKEETEQKISEAASKAISQRLQKLQTRFDRCVKEKQFLEDLNENLVKNKDVWSTKITEMKEREKKAVRAKDEKIQGLEEQLGNLMAQMDGESEVSETKEVQDATVSTTNTSSSGAGNVIHANKKKSNRRKG</sequence>